<dbReference type="EMBL" id="CP000926">
    <property type="protein sequence ID" value="ABY99371.1"/>
    <property type="molecule type" value="Genomic_DNA"/>
</dbReference>
<dbReference type="SMR" id="B0KKR7"/>
<dbReference type="KEGG" id="ppg:PputGB1_3480"/>
<dbReference type="eggNOG" id="COG0290">
    <property type="taxonomic scope" value="Bacteria"/>
</dbReference>
<dbReference type="HOGENOM" id="CLU_054919_3_2_6"/>
<dbReference type="Proteomes" id="UP000002157">
    <property type="component" value="Chromosome"/>
</dbReference>
<dbReference type="GO" id="GO:0005829">
    <property type="term" value="C:cytosol"/>
    <property type="evidence" value="ECO:0007669"/>
    <property type="project" value="TreeGrafter"/>
</dbReference>
<dbReference type="GO" id="GO:0016020">
    <property type="term" value="C:membrane"/>
    <property type="evidence" value="ECO:0007669"/>
    <property type="project" value="TreeGrafter"/>
</dbReference>
<dbReference type="GO" id="GO:0043022">
    <property type="term" value="F:ribosome binding"/>
    <property type="evidence" value="ECO:0007669"/>
    <property type="project" value="TreeGrafter"/>
</dbReference>
<dbReference type="GO" id="GO:0003743">
    <property type="term" value="F:translation initiation factor activity"/>
    <property type="evidence" value="ECO:0007669"/>
    <property type="project" value="UniProtKB-UniRule"/>
</dbReference>
<dbReference type="GO" id="GO:0032790">
    <property type="term" value="P:ribosome disassembly"/>
    <property type="evidence" value="ECO:0007669"/>
    <property type="project" value="TreeGrafter"/>
</dbReference>
<dbReference type="FunFam" id="3.10.20.80:FF:000001">
    <property type="entry name" value="Translation initiation factor IF-3"/>
    <property type="match status" value="1"/>
</dbReference>
<dbReference type="FunFam" id="3.30.110.10:FF:000001">
    <property type="entry name" value="Translation initiation factor IF-3"/>
    <property type="match status" value="1"/>
</dbReference>
<dbReference type="Gene3D" id="3.30.110.10">
    <property type="entry name" value="Translation initiation factor 3 (IF-3), C-terminal domain"/>
    <property type="match status" value="1"/>
</dbReference>
<dbReference type="Gene3D" id="3.10.20.80">
    <property type="entry name" value="Translation initiation factor 3 (IF-3), N-terminal domain"/>
    <property type="match status" value="1"/>
</dbReference>
<dbReference type="HAMAP" id="MF_00080">
    <property type="entry name" value="IF_3"/>
    <property type="match status" value="1"/>
</dbReference>
<dbReference type="InterPro" id="IPR036788">
    <property type="entry name" value="T_IF-3_C_sf"/>
</dbReference>
<dbReference type="InterPro" id="IPR036787">
    <property type="entry name" value="T_IF-3_N_sf"/>
</dbReference>
<dbReference type="InterPro" id="IPR001288">
    <property type="entry name" value="Translation_initiation_fac_3"/>
</dbReference>
<dbReference type="InterPro" id="IPR019815">
    <property type="entry name" value="Translation_initiation_fac_3_C"/>
</dbReference>
<dbReference type="InterPro" id="IPR019814">
    <property type="entry name" value="Translation_initiation_fac_3_N"/>
</dbReference>
<dbReference type="NCBIfam" id="TIGR00168">
    <property type="entry name" value="infC"/>
    <property type="match status" value="1"/>
</dbReference>
<dbReference type="PANTHER" id="PTHR10938">
    <property type="entry name" value="TRANSLATION INITIATION FACTOR IF-3"/>
    <property type="match status" value="1"/>
</dbReference>
<dbReference type="PANTHER" id="PTHR10938:SF0">
    <property type="entry name" value="TRANSLATION INITIATION FACTOR IF-3, MITOCHONDRIAL"/>
    <property type="match status" value="1"/>
</dbReference>
<dbReference type="Pfam" id="PF00707">
    <property type="entry name" value="IF3_C"/>
    <property type="match status" value="1"/>
</dbReference>
<dbReference type="Pfam" id="PF05198">
    <property type="entry name" value="IF3_N"/>
    <property type="match status" value="1"/>
</dbReference>
<dbReference type="SUPFAM" id="SSF55200">
    <property type="entry name" value="Translation initiation factor IF3, C-terminal domain"/>
    <property type="match status" value="1"/>
</dbReference>
<dbReference type="SUPFAM" id="SSF54364">
    <property type="entry name" value="Translation initiation factor IF3, N-terminal domain"/>
    <property type="match status" value="1"/>
</dbReference>
<evidence type="ECO:0000255" key="1">
    <source>
        <dbReference type="HAMAP-Rule" id="MF_00080"/>
    </source>
</evidence>
<keyword id="KW-0963">Cytoplasm</keyword>
<keyword id="KW-0396">Initiation factor</keyword>
<keyword id="KW-0648">Protein biosynthesis</keyword>
<reference key="1">
    <citation type="submission" date="2008-01" db="EMBL/GenBank/DDBJ databases">
        <title>Complete sequence of Pseudomonas putida GB-1.</title>
        <authorList>
            <consortium name="US DOE Joint Genome Institute"/>
            <person name="Copeland A."/>
            <person name="Lucas S."/>
            <person name="Lapidus A."/>
            <person name="Barry K."/>
            <person name="Glavina del Rio T."/>
            <person name="Dalin E."/>
            <person name="Tice H."/>
            <person name="Pitluck S."/>
            <person name="Bruce D."/>
            <person name="Goodwin L."/>
            <person name="Chertkov O."/>
            <person name="Brettin T."/>
            <person name="Detter J.C."/>
            <person name="Han C."/>
            <person name="Kuske C.R."/>
            <person name="Schmutz J."/>
            <person name="Larimer F."/>
            <person name="Land M."/>
            <person name="Hauser L."/>
            <person name="Kyrpides N."/>
            <person name="Kim E."/>
            <person name="McCarthy J.K."/>
            <person name="Richardson P."/>
        </authorList>
    </citation>
    <scope>NUCLEOTIDE SEQUENCE [LARGE SCALE GENOMIC DNA]</scope>
    <source>
        <strain>GB-1</strain>
    </source>
</reference>
<accession>B0KKR7</accession>
<protein>
    <recommendedName>
        <fullName evidence="1">Translation initiation factor IF-3</fullName>
    </recommendedName>
</protein>
<comment type="function">
    <text evidence="1">IF-3 binds to the 30S ribosomal subunit and shifts the equilibrium between 70S ribosomes and their 50S and 30S subunits in favor of the free subunits, thus enhancing the availability of 30S subunits on which protein synthesis initiation begins.</text>
</comment>
<comment type="subunit">
    <text evidence="1">Monomer.</text>
</comment>
<comment type="subcellular location">
    <subcellularLocation>
        <location evidence="1">Cytoplasm</location>
    </subcellularLocation>
</comment>
<comment type="similarity">
    <text evidence="1">Belongs to the IF-3 family.</text>
</comment>
<name>IF3_PSEPG</name>
<organism>
    <name type="scientific">Pseudomonas putida (strain GB-1)</name>
    <dbReference type="NCBI Taxonomy" id="76869"/>
    <lineage>
        <taxon>Bacteria</taxon>
        <taxon>Pseudomonadati</taxon>
        <taxon>Pseudomonadota</taxon>
        <taxon>Gammaproteobacteria</taxon>
        <taxon>Pseudomonadales</taxon>
        <taxon>Pseudomonadaceae</taxon>
        <taxon>Pseudomonas</taxon>
    </lineage>
</organism>
<proteinExistence type="inferred from homology"/>
<sequence length="183" mass="20879">MTIKREMRNDKRAVPKAPINENISAREVRLIGADGEQVGIVSIDEALRIADEAKLDLVEISADAVPPVCKVMDYGKHLFEKKKQANEAKKNQKQIQIKEIKFRPGTEDGDYQVKLRNLVRFLTDGDKAKISLRFRGREMAHQELGMELLKRVEADLAEYGTVEQHPKMEGRQLMMVIAPKKKK</sequence>
<feature type="chain" id="PRO_1000075275" description="Translation initiation factor IF-3">
    <location>
        <begin position="1"/>
        <end position="183"/>
    </location>
</feature>
<gene>
    <name evidence="1" type="primary">infC</name>
    <name type="ordered locus">PputGB1_3480</name>
</gene>